<keyword id="KW-1003">Cell membrane</keyword>
<keyword id="KW-1015">Disulfide bond</keyword>
<keyword id="KW-0297">G-protein coupled receptor</keyword>
<keyword id="KW-0325">Glycoprotein</keyword>
<keyword id="KW-0472">Membrane</keyword>
<keyword id="KW-0675">Receptor</keyword>
<keyword id="KW-1185">Reference proteome</keyword>
<keyword id="KW-0732">Signal</keyword>
<keyword id="KW-0807">Transducer</keyword>
<keyword id="KW-0812">Transmembrane</keyword>
<keyword id="KW-1133">Transmembrane helix</keyword>
<protein>
    <recommendedName>
        <fullName>Metabotropic glutamate receptor 3</fullName>
        <shortName>mGluR3</shortName>
    </recommendedName>
</protein>
<gene>
    <name type="primary">GRM3</name>
</gene>
<name>GRM3_MACFA</name>
<proteinExistence type="evidence at transcript level"/>
<evidence type="ECO:0000250" key="1"/>
<evidence type="ECO:0000255" key="2"/>
<evidence type="ECO:0000305" key="3"/>
<comment type="function">
    <text evidence="1">G-protein coupled receptor for glutamate. Ligand binding causes a conformation change that triggers signaling via guanine nucleotide-binding proteins (G proteins) and modulates the activity of down-stream effectors. Signaling inhibits adenylate cyclase activity (By similarity).</text>
</comment>
<comment type="subunit">
    <text evidence="1">Interacts with TAMALIN.</text>
</comment>
<comment type="subcellular location">
    <subcellularLocation>
        <location evidence="1">Cell membrane</location>
        <topology evidence="1">Multi-pass membrane protein</topology>
    </subcellularLocation>
</comment>
<comment type="similarity">
    <text evidence="3">Belongs to the G-protein coupled receptor 3 family.</text>
</comment>
<accession>Q1ZZH1</accession>
<reference key="1">
    <citation type="journal article" date="2006" name="Mol. Vis.">
        <title>Expression and sequences of genes encoding glutamate receptors and transporters in primate retina determined using 3'-end amplification polymerase chain reaction.</title>
        <authorList>
            <person name="Hanna M.C."/>
            <person name="Calkins D.J."/>
        </authorList>
    </citation>
    <scope>NUCLEOTIDE SEQUENCE [MRNA]</scope>
    <source>
        <tissue>Retina</tissue>
    </source>
</reference>
<sequence length="879" mass="98937">MKMLTRLQVLTLALFSKGFLLSLGDHNFLRREIKIEGDLVLGGLFPIKEKGTGTEECGRINEDRGIQRLEAMLFAIDEINKDDYLLPGVKLGVHILDTCSRDTYALEQSLEFVRASLTKVDEAEYMCPDGSYAIQENIPLLIAGVIGGSYSSVSIQVANLLRLFQIPQISYASTSAKLSDKSRYDYFARTVPPDFYQAKAMAEILRFFNWTYVSTVASEGDYGETGIEAFEQEARLRNICIATAEKVGRSNIRKSYDSVIRELLQKPNARVVVLFMRSDDSRELIAAASRANASFTWVASDGWGAQESIIKGSEHVAYGAITLELASQPVRQFDRYFQSLNPYNNHRNPWFRDFWEQKFQCSLQNKRNHRRVCDKHLAIDSSNYEQESKIMFVVNAVYAMAHALHKMQRTLCPNTTKLCDAMKILDGKKLYKDYLLKINFTAPFNPNKDADSIVKFDTFGDGMGRYNVFNFQNVGGKYSYLKVGHWAETLSLDVNSIHWSRNSVPTSQCSDPCAPNEMKNMQPGDVCCWICIPCESYEYLADEFTCMDCGPGQWPTADLTGCYDLPEDYIRWEDAWAIGPVTIACLGFMCTCMVITVFIKHNNTPLVKASGRELCYILLFGVGLSYCMTFFFIAKPSPVICALRRLGLGSSFAICYSALLTKTNCIARIFDGVKNGAQRPKFISPSSQVFICLGLILVQIVMVSVWLILEAPGTRRYTLAEKRETVILKCNVKDSSMLISLTYDVILVILCTVYAFKTRKCPENFNEAKFIGFTMYTTCIIWLAFLPIFYVTSSDYRVQTTTMCISVSLSGFVVLGCLFAPKVHIILFQPQKNVVTHRLHLNRFSVSGTGTTYSQSSASMYVPTVCNGREVLDSTTSSL</sequence>
<dbReference type="EMBL" id="DQ417734">
    <property type="protein sequence ID" value="ABD74419.1"/>
    <property type="molecule type" value="mRNA"/>
</dbReference>
<dbReference type="SMR" id="Q1ZZH1"/>
<dbReference type="STRING" id="9541.ENSMFAP00000005112"/>
<dbReference type="GlyCosmos" id="Q1ZZH1">
    <property type="glycosylation" value="4 sites, No reported glycans"/>
</dbReference>
<dbReference type="eggNOG" id="KOG1056">
    <property type="taxonomic scope" value="Eukaryota"/>
</dbReference>
<dbReference type="Proteomes" id="UP000233100">
    <property type="component" value="Unplaced"/>
</dbReference>
<dbReference type="GO" id="GO:0005886">
    <property type="term" value="C:plasma membrane"/>
    <property type="evidence" value="ECO:0007669"/>
    <property type="project" value="UniProtKB-SubCell"/>
</dbReference>
<dbReference type="GO" id="GO:0004930">
    <property type="term" value="F:G protein-coupled receptor activity"/>
    <property type="evidence" value="ECO:0007669"/>
    <property type="project" value="UniProtKB-KW"/>
</dbReference>
<dbReference type="GO" id="GO:0008066">
    <property type="term" value="F:glutamate receptor activity"/>
    <property type="evidence" value="ECO:0007669"/>
    <property type="project" value="UniProtKB-ARBA"/>
</dbReference>
<dbReference type="CDD" id="cd15448">
    <property type="entry name" value="7tmC_mGluR3"/>
    <property type="match status" value="1"/>
</dbReference>
<dbReference type="CDD" id="cd06375">
    <property type="entry name" value="PBP1_mGluR_groupII"/>
    <property type="match status" value="1"/>
</dbReference>
<dbReference type="FunFam" id="2.10.50.30:FF:000001">
    <property type="entry name" value="metabotropic glutamate receptor 1"/>
    <property type="match status" value="1"/>
</dbReference>
<dbReference type="FunFam" id="3.40.50.2300:FF:000029">
    <property type="entry name" value="Metabotropic glutamate receptor 3"/>
    <property type="match status" value="1"/>
</dbReference>
<dbReference type="Gene3D" id="3.40.50.2300">
    <property type="match status" value="2"/>
</dbReference>
<dbReference type="Gene3D" id="2.10.50.30">
    <property type="entry name" value="GPCR, family 3, nine cysteines domain"/>
    <property type="match status" value="1"/>
</dbReference>
<dbReference type="InterPro" id="IPR001828">
    <property type="entry name" value="ANF_lig-bd_rcpt"/>
</dbReference>
<dbReference type="InterPro" id="IPR000337">
    <property type="entry name" value="GPCR_3"/>
</dbReference>
<dbReference type="InterPro" id="IPR011500">
    <property type="entry name" value="GPCR_3_9-Cys_dom"/>
</dbReference>
<dbReference type="InterPro" id="IPR038550">
    <property type="entry name" value="GPCR_3_9-Cys_sf"/>
</dbReference>
<dbReference type="InterPro" id="IPR017978">
    <property type="entry name" value="GPCR_3_C"/>
</dbReference>
<dbReference type="InterPro" id="IPR017979">
    <property type="entry name" value="GPCR_3_CS"/>
</dbReference>
<dbReference type="InterPro" id="IPR001234">
    <property type="entry name" value="GPCR_3_mGluR3"/>
</dbReference>
<dbReference type="InterPro" id="IPR000162">
    <property type="entry name" value="GPCR_3_mtglu_rcpt"/>
</dbReference>
<dbReference type="InterPro" id="IPR050726">
    <property type="entry name" value="mGluR"/>
</dbReference>
<dbReference type="InterPro" id="IPR028082">
    <property type="entry name" value="Peripla_BP_I"/>
</dbReference>
<dbReference type="PANTHER" id="PTHR24060">
    <property type="entry name" value="METABOTROPIC GLUTAMATE RECEPTOR"/>
    <property type="match status" value="1"/>
</dbReference>
<dbReference type="Pfam" id="PF00003">
    <property type="entry name" value="7tm_3"/>
    <property type="match status" value="1"/>
</dbReference>
<dbReference type="Pfam" id="PF01094">
    <property type="entry name" value="ANF_receptor"/>
    <property type="match status" value="1"/>
</dbReference>
<dbReference type="Pfam" id="PF07562">
    <property type="entry name" value="NCD3G"/>
    <property type="match status" value="1"/>
</dbReference>
<dbReference type="PRINTS" id="PR00248">
    <property type="entry name" value="GPCRMGR"/>
</dbReference>
<dbReference type="PRINTS" id="PR01053">
    <property type="entry name" value="MTABOTROPC3R"/>
</dbReference>
<dbReference type="PRINTS" id="PR00593">
    <property type="entry name" value="MTABOTROPICR"/>
</dbReference>
<dbReference type="SUPFAM" id="SSF53822">
    <property type="entry name" value="Periplasmic binding protein-like I"/>
    <property type="match status" value="1"/>
</dbReference>
<dbReference type="PROSITE" id="PS00979">
    <property type="entry name" value="G_PROTEIN_RECEP_F3_1"/>
    <property type="match status" value="1"/>
</dbReference>
<dbReference type="PROSITE" id="PS00980">
    <property type="entry name" value="G_PROTEIN_RECEP_F3_2"/>
    <property type="match status" value="1"/>
</dbReference>
<dbReference type="PROSITE" id="PS00981">
    <property type="entry name" value="G_PROTEIN_RECEP_F3_3"/>
    <property type="match status" value="1"/>
</dbReference>
<dbReference type="PROSITE" id="PS50259">
    <property type="entry name" value="G_PROTEIN_RECEP_F3_4"/>
    <property type="match status" value="1"/>
</dbReference>
<organism>
    <name type="scientific">Macaca fascicularis</name>
    <name type="common">Crab-eating macaque</name>
    <name type="synonym">Cynomolgus monkey</name>
    <dbReference type="NCBI Taxonomy" id="9541"/>
    <lineage>
        <taxon>Eukaryota</taxon>
        <taxon>Metazoa</taxon>
        <taxon>Chordata</taxon>
        <taxon>Craniata</taxon>
        <taxon>Vertebrata</taxon>
        <taxon>Euteleostomi</taxon>
        <taxon>Mammalia</taxon>
        <taxon>Eutheria</taxon>
        <taxon>Euarchontoglires</taxon>
        <taxon>Primates</taxon>
        <taxon>Haplorrhini</taxon>
        <taxon>Catarrhini</taxon>
        <taxon>Cercopithecidae</taxon>
        <taxon>Cercopithecinae</taxon>
        <taxon>Macaca</taxon>
    </lineage>
</organism>
<feature type="signal peptide" evidence="2">
    <location>
        <begin position="1"/>
        <end position="24"/>
    </location>
</feature>
<feature type="chain" id="PRO_0000250699" description="Metabotropic glutamate receptor 3">
    <location>
        <begin position="25"/>
        <end position="879"/>
    </location>
</feature>
<feature type="topological domain" description="Extracellular" evidence="2">
    <location>
        <begin position="25"/>
        <end position="577"/>
    </location>
</feature>
<feature type="transmembrane region" description="Helical; Name=1" evidence="2">
    <location>
        <begin position="578"/>
        <end position="598"/>
    </location>
</feature>
<feature type="topological domain" description="Cytoplasmic" evidence="2">
    <location>
        <begin position="599"/>
        <end position="613"/>
    </location>
</feature>
<feature type="transmembrane region" description="Helical; Name=2" evidence="2">
    <location>
        <begin position="614"/>
        <end position="634"/>
    </location>
</feature>
<feature type="topological domain" description="Extracellular" evidence="2">
    <location>
        <begin position="635"/>
        <end position="688"/>
    </location>
</feature>
<feature type="transmembrane region" description="Helical; Name=3" evidence="2">
    <location>
        <begin position="689"/>
        <end position="709"/>
    </location>
</feature>
<feature type="topological domain" description="Cytoplasmic" evidence="2">
    <location>
        <begin position="710"/>
        <end position="735"/>
    </location>
</feature>
<feature type="transmembrane region" description="Helical; Name=4" evidence="2">
    <location>
        <begin position="736"/>
        <end position="756"/>
    </location>
</feature>
<feature type="topological domain" description="Extracellular" evidence="2">
    <location>
        <begin position="757"/>
        <end position="769"/>
    </location>
</feature>
<feature type="transmembrane region" description="Helical; Name=5" evidence="2">
    <location>
        <begin position="770"/>
        <end position="790"/>
    </location>
</feature>
<feature type="topological domain" description="Cytoplasmic" evidence="2">
    <location>
        <begin position="791"/>
        <end position="807"/>
    </location>
</feature>
<feature type="transmembrane region" description="Helical; Name=6" evidence="2">
    <location>
        <begin position="808"/>
        <end position="828"/>
    </location>
</feature>
<feature type="topological domain" description="Extracellular" evidence="2">
    <location>
        <begin position="829"/>
        <end position="879"/>
    </location>
</feature>
<feature type="binding site" evidence="1">
    <location>
        <position position="151"/>
    </location>
    <ligand>
        <name>L-glutamate</name>
        <dbReference type="ChEBI" id="CHEBI:29985"/>
    </ligand>
</feature>
<feature type="binding site" evidence="1">
    <location>
        <begin position="172"/>
        <end position="174"/>
    </location>
    <ligand>
        <name>L-glutamate</name>
        <dbReference type="ChEBI" id="CHEBI:29985"/>
    </ligand>
</feature>
<feature type="binding site" evidence="1">
    <location>
        <position position="222"/>
    </location>
    <ligand>
        <name>L-glutamate</name>
        <dbReference type="ChEBI" id="CHEBI:29985"/>
    </ligand>
</feature>
<feature type="binding site" evidence="1">
    <location>
        <position position="301"/>
    </location>
    <ligand>
        <name>L-glutamate</name>
        <dbReference type="ChEBI" id="CHEBI:29985"/>
    </ligand>
</feature>
<feature type="binding site" evidence="1">
    <location>
        <position position="389"/>
    </location>
    <ligand>
        <name>L-glutamate</name>
        <dbReference type="ChEBI" id="CHEBI:29985"/>
    </ligand>
</feature>
<feature type="glycosylation site" description="N-linked (GlcNAc...) asparagine" evidence="2">
    <location>
        <position position="209"/>
    </location>
</feature>
<feature type="glycosylation site" description="N-linked (GlcNAc...) asparagine" evidence="2">
    <location>
        <position position="292"/>
    </location>
</feature>
<feature type="glycosylation site" description="N-linked (GlcNAc...) asparagine" evidence="2">
    <location>
        <position position="414"/>
    </location>
</feature>
<feature type="glycosylation site" description="N-linked (GlcNAc...) asparagine" evidence="2">
    <location>
        <position position="439"/>
    </location>
</feature>
<feature type="disulfide bond" evidence="1">
    <location>
        <begin position="57"/>
        <end position="99"/>
    </location>
</feature>
<feature type="disulfide bond" evidence="1">
    <location>
        <begin position="240"/>
        <end position="527"/>
    </location>
</feature>
<feature type="disulfide bond" evidence="1">
    <location>
        <begin position="361"/>
        <end position="373"/>
    </location>
</feature>
<feature type="disulfide bond" evidence="1">
    <location>
        <begin position="412"/>
        <end position="419"/>
    </location>
</feature>
<feature type="disulfide bond" evidence="1">
    <location>
        <begin position="509"/>
        <end position="528"/>
    </location>
</feature>
<feature type="disulfide bond" evidence="1">
    <location>
        <begin position="513"/>
        <end position="531"/>
    </location>
</feature>
<feature type="disulfide bond" evidence="1">
    <location>
        <begin position="534"/>
        <end position="546"/>
    </location>
</feature>
<feature type="disulfide bond" evidence="1">
    <location>
        <begin position="549"/>
        <end position="562"/>
    </location>
</feature>